<keyword id="KW-0025">Alternative splicing</keyword>
<keyword id="KW-0256">Endoplasmic reticulum</keyword>
<keyword id="KW-0551">Lipid droplet</keyword>
<keyword id="KW-0472">Membrane</keyword>
<keyword id="KW-0597">Phosphoprotein</keyword>
<keyword id="KW-1185">Reference proteome</keyword>
<keyword id="KW-0749">Sporulation</keyword>
<keyword id="KW-0812">Transmembrane</keyword>
<keyword id="KW-1133">Transmembrane helix</keyword>
<organism>
    <name type="scientific">Saccharomyces cerevisiae (strain ATCC 204508 / S288c)</name>
    <name type="common">Baker's yeast</name>
    <dbReference type="NCBI Taxonomy" id="559292"/>
    <lineage>
        <taxon>Eukaryota</taxon>
        <taxon>Fungi</taxon>
        <taxon>Dikarya</taxon>
        <taxon>Ascomycota</taxon>
        <taxon>Saccharomycotina</taxon>
        <taxon>Saccharomycetes</taxon>
        <taxon>Saccharomycetales</taxon>
        <taxon>Saccharomycetaceae</taxon>
        <taxon>Saccharomyces</taxon>
    </lineage>
</organism>
<comment type="function">
    <text evidence="6 10 11 17">Involved in lipid droplet (LD) organization. Functions primarily upon nutrient depletion, facilitating LD consumption by lipophagy (PubMed:29187528). Required for correct LD distribution during entry into stationary phase, where LDs accumulate at nucleus-vacuole junction (NVJ) contact sites (PubMed:29187527). Involved in membrane interaction in a manner similar to those of SNARE proteins, binding to partners present in mitochondria or peroxisomes. Its partner on the mitochondrion side might be TOM22, a mitochondrial outer membrane protein, linking lipid droplets and mitochondria by protein-protein interaction (Probable). Involved in spore wall assembly (PubMed:19779569).</text>
</comment>
<comment type="subunit">
    <text evidence="7 10 11">Interacts specifically with the seipin complex FLD1-LDB16. Only a fraction appears to associate with the seipin core components, suggesting that it may be an ancillary subunit of the complex (PubMed:29187527, PubMed:29187528). Found to interact with many mitochondrial and peroxisomal proteins (PubMed:21748599).</text>
</comment>
<comment type="interaction">
    <interactant intactId="EBI-3681488">
        <id>P40219</id>
    </interactant>
    <interactant intactId="EBI-28581">
        <id>P53756</id>
        <label>PDR18</label>
    </interactant>
    <organismsDiffer>false</organismsDiffer>
    <experiments>2</experiments>
</comment>
<comment type="subcellular location">
    <subcellularLocation>
        <location evidence="18">Endoplasmic reticulum membrane</location>
        <topology>Multi-pass membrane protein</topology>
    </subcellularLocation>
    <subcellularLocation>
        <location evidence="3 7 8 9 18">Lipid droplet</location>
    </subcellularLocation>
    <text evidence="18">Contains a predicted membrane hairpin, a motif allowing association with both ER bilayers and LD monolayers.</text>
</comment>
<comment type="alternative products">
    <event type="alternative splicing"/>
    <isoform>
        <id>P40219-1</id>
        <name evidence="13 14">LDO16</name>
        <sequence type="displayed"/>
    </isoform>
    <isoform>
        <id>P40218-1</id>
        <name evidence="13 14">LDO45</name>
        <sequence type="external"/>
    </isoform>
</comment>
<comment type="miscellaneous">
    <text evidence="4">Present with 922 molecules/cell in log phase SD medium.</text>
</comment>
<comment type="miscellaneous">
    <molecule>Isoform LDO16</molecule>
    <text evidence="11">Produced by translation of the YMR148W ORF driven from its own promoter.</text>
</comment>
<comment type="similarity">
    <text evidence="15">Belongs to the OSW5 family.</text>
</comment>
<sequence>MVSTATFFFFVYLTLFVVIGFFSSLFIIPLLGISFVFAIGVVSFGFCSNMSFKMAQLIYVRADAFLKKVLDKMALQTQPAQLQEPQEPLSTLRPVSNPTIPSPLRQTARPSKFVTEEDVIFEPVSAQSAIARSLETTANKAGNKFQLS</sequence>
<proteinExistence type="evidence at protein level"/>
<dbReference type="EMBL" id="Z47071">
    <property type="protein sequence ID" value="CAA87363.1"/>
    <property type="molecule type" value="Genomic_DNA"/>
</dbReference>
<dbReference type="EMBL" id="AY558413">
    <property type="protein sequence ID" value="AAS56739.1"/>
    <property type="molecule type" value="Genomic_DNA"/>
</dbReference>
<dbReference type="EMBL" id="BK006946">
    <property type="protein sequence ID" value="DAA10044.1"/>
    <property type="molecule type" value="Genomic_DNA"/>
</dbReference>
<dbReference type="PIR" id="S50405">
    <property type="entry name" value="S50405"/>
</dbReference>
<dbReference type="RefSeq" id="NP_013868.1">
    <molecule id="P40219-1"/>
    <property type="nucleotide sequence ID" value="NM_001182650.1"/>
</dbReference>
<dbReference type="SMR" id="P40219"/>
<dbReference type="BioGRID" id="35324">
    <property type="interactions" value="97"/>
</dbReference>
<dbReference type="FunCoup" id="P40219">
    <property type="interactions" value="17"/>
</dbReference>
<dbReference type="IntAct" id="P40219">
    <property type="interactions" value="6"/>
</dbReference>
<dbReference type="MINT" id="P40219"/>
<dbReference type="STRING" id="4932.YMR148W"/>
<dbReference type="iPTMnet" id="P40219"/>
<dbReference type="PaxDb" id="4932-YMR148W"/>
<dbReference type="PeptideAtlas" id="P40219"/>
<dbReference type="EnsemblFungi" id="YMR148W_mRNA">
    <molecule id="P40219-1"/>
    <property type="protein sequence ID" value="YMR148W"/>
    <property type="gene ID" value="YMR148W"/>
</dbReference>
<dbReference type="GeneID" id="855179"/>
<dbReference type="KEGG" id="sce:YMR148W"/>
<dbReference type="AGR" id="SGD:S000004756"/>
<dbReference type="SGD" id="S000004756">
    <property type="gene designation" value="LDO16"/>
</dbReference>
<dbReference type="VEuPathDB" id="FungiDB:YMR148W"/>
<dbReference type="eggNOG" id="ENOG502SA41">
    <property type="taxonomic scope" value="Eukaryota"/>
</dbReference>
<dbReference type="HOGENOM" id="CLU_147574_0_0_1"/>
<dbReference type="InParanoid" id="P40219"/>
<dbReference type="OMA" id="SLETXAN"/>
<dbReference type="OrthoDB" id="4070395at2759"/>
<dbReference type="BioCyc" id="YEAST:G3O-32840-MONOMER"/>
<dbReference type="BioGRID-ORCS" id="855179">
    <property type="hits" value="0 hits in 10 CRISPR screens"/>
</dbReference>
<dbReference type="ChiTaRS" id="OSW5">
    <property type="organism name" value="yeast"/>
</dbReference>
<dbReference type="PRO" id="PR:P40219"/>
<dbReference type="Proteomes" id="UP000002311">
    <property type="component" value="Chromosome XIII"/>
</dbReference>
<dbReference type="RNAct" id="P40219">
    <property type="molecule type" value="protein"/>
</dbReference>
<dbReference type="GO" id="GO:0005789">
    <property type="term" value="C:endoplasmic reticulum membrane"/>
    <property type="evidence" value="ECO:0007669"/>
    <property type="project" value="UniProtKB-SubCell"/>
</dbReference>
<dbReference type="GO" id="GO:0005811">
    <property type="term" value="C:lipid droplet"/>
    <property type="evidence" value="ECO:0000314"/>
    <property type="project" value="SGD"/>
</dbReference>
<dbReference type="GO" id="GO:0044877">
    <property type="term" value="F:protein-containing complex binding"/>
    <property type="evidence" value="ECO:0000314"/>
    <property type="project" value="SGD"/>
</dbReference>
<dbReference type="GO" id="GO:0030476">
    <property type="term" value="P:ascospore wall assembly"/>
    <property type="evidence" value="ECO:0000315"/>
    <property type="project" value="SGD"/>
</dbReference>
<dbReference type="GO" id="GO:0034389">
    <property type="term" value="P:lipid droplet organization"/>
    <property type="evidence" value="ECO:0000315"/>
    <property type="project" value="SGD"/>
</dbReference>
<dbReference type="InterPro" id="IPR031430">
    <property type="entry name" value="Osw5"/>
</dbReference>
<dbReference type="Pfam" id="PF17062">
    <property type="entry name" value="Osw5"/>
    <property type="match status" value="1"/>
</dbReference>
<gene>
    <name evidence="13" type="primary">LDO16</name>
    <name evidence="12" type="synonym">OSW5</name>
    <name type="ordered locus">YMR148W</name>
    <name type="ORF">YM9375.18</name>
</gene>
<name>LDO16_YEAST</name>
<reference key="1">
    <citation type="journal article" date="1997" name="Nature">
        <title>The nucleotide sequence of Saccharomyces cerevisiae chromosome XIII.</title>
        <authorList>
            <person name="Bowman S."/>
            <person name="Churcher C.M."/>
            <person name="Badcock K."/>
            <person name="Brown D."/>
            <person name="Chillingworth T."/>
            <person name="Connor R."/>
            <person name="Dedman K."/>
            <person name="Devlin K."/>
            <person name="Gentles S."/>
            <person name="Hamlin N."/>
            <person name="Hunt S."/>
            <person name="Jagels K."/>
            <person name="Lye G."/>
            <person name="Moule S."/>
            <person name="Odell C."/>
            <person name="Pearson D."/>
            <person name="Rajandream M.A."/>
            <person name="Rice P."/>
            <person name="Skelton J."/>
            <person name="Walsh S.V."/>
            <person name="Whitehead S."/>
            <person name="Barrell B.G."/>
        </authorList>
    </citation>
    <scope>NUCLEOTIDE SEQUENCE [LARGE SCALE GENOMIC DNA]</scope>
    <source>
        <strain>ATCC 204508 / S288c</strain>
    </source>
</reference>
<reference key="2">
    <citation type="journal article" date="2014" name="G3 (Bethesda)">
        <title>The reference genome sequence of Saccharomyces cerevisiae: Then and now.</title>
        <authorList>
            <person name="Engel S.R."/>
            <person name="Dietrich F.S."/>
            <person name="Fisk D.G."/>
            <person name="Binkley G."/>
            <person name="Balakrishnan R."/>
            <person name="Costanzo M.C."/>
            <person name="Dwight S.S."/>
            <person name="Hitz B.C."/>
            <person name="Karra K."/>
            <person name="Nash R.S."/>
            <person name="Weng S."/>
            <person name="Wong E.D."/>
            <person name="Lloyd P."/>
            <person name="Skrzypek M.S."/>
            <person name="Miyasato S.R."/>
            <person name="Simison M."/>
            <person name="Cherry J.M."/>
        </authorList>
    </citation>
    <scope>GENOME REANNOTATION</scope>
    <source>
        <strain>ATCC 204508 / S288c</strain>
    </source>
</reference>
<reference key="3">
    <citation type="journal article" date="2007" name="Genome Res.">
        <title>Approaching a complete repository of sequence-verified protein-encoding clones for Saccharomyces cerevisiae.</title>
        <authorList>
            <person name="Hu Y."/>
            <person name="Rolfs A."/>
            <person name="Bhullar B."/>
            <person name="Murthy T.V.S."/>
            <person name="Zhu C."/>
            <person name="Berger M.F."/>
            <person name="Camargo A.A."/>
            <person name="Kelley F."/>
            <person name="McCarron S."/>
            <person name="Jepson D."/>
            <person name="Richardson A."/>
            <person name="Raphael J."/>
            <person name="Moreira D."/>
            <person name="Taycher E."/>
            <person name="Zuo D."/>
            <person name="Mohr S."/>
            <person name="Kane M.F."/>
            <person name="Williamson J."/>
            <person name="Simpson A.J.G."/>
            <person name="Bulyk M.L."/>
            <person name="Harlow E."/>
            <person name="Marsischky G."/>
            <person name="Kolodner R.D."/>
            <person name="LaBaer J."/>
        </authorList>
    </citation>
    <scope>NUCLEOTIDE SEQUENCE [GENOMIC DNA]</scope>
    <source>
        <strain>ATCC 204508 / S288c</strain>
    </source>
</reference>
<reference key="4">
    <citation type="journal article" date="2003" name="Nature">
        <title>Global analysis of protein localization in budding yeast.</title>
        <authorList>
            <person name="Huh W.-K."/>
            <person name="Falvo J.V."/>
            <person name="Gerke L.C."/>
            <person name="Carroll A.S."/>
            <person name="Howson R.W."/>
            <person name="Weissman J.S."/>
            <person name="O'Shea E.K."/>
        </authorList>
    </citation>
    <scope>SUBCELLULAR LOCATION [LARGE SCALE ANALYSIS]</scope>
</reference>
<reference key="5">
    <citation type="journal article" date="2003" name="Nature">
        <title>Global analysis of protein expression in yeast.</title>
        <authorList>
            <person name="Ghaemmaghami S."/>
            <person name="Huh W.-K."/>
            <person name="Bower K."/>
            <person name="Howson R.W."/>
            <person name="Belle A."/>
            <person name="Dephoure N."/>
            <person name="O'Shea E.K."/>
            <person name="Weissman J.S."/>
        </authorList>
    </citation>
    <scope>LEVEL OF PROTEIN EXPRESSION [LARGE SCALE ANALYSIS]</scope>
</reference>
<reference key="6">
    <citation type="journal article" date="2006" name="Proc. Natl. Acad. Sci. U.S.A.">
        <title>A global topology map of the Saccharomyces cerevisiae membrane proteome.</title>
        <authorList>
            <person name="Kim H."/>
            <person name="Melen K."/>
            <person name="Oesterberg M."/>
            <person name="von Heijne G."/>
        </authorList>
    </citation>
    <scope>TOPOLOGY [LARGE SCALE ANALYSIS]</scope>
    <source>
        <strain>ATCC 208353 / W303-1A</strain>
    </source>
</reference>
<reference key="7">
    <citation type="journal article" date="2008" name="Mol. Cell. Proteomics">
        <title>A multidimensional chromatography technology for in-depth phosphoproteome analysis.</title>
        <authorList>
            <person name="Albuquerque C.P."/>
            <person name="Smolka M.B."/>
            <person name="Payne S.H."/>
            <person name="Bafna V."/>
            <person name="Eng J."/>
            <person name="Zhou H."/>
        </authorList>
    </citation>
    <scope>PHOSPHORYLATION [LARGE SCALE ANALYSIS] AT SER-102</scope>
    <scope>IDENTIFICATION BY MASS SPECTROMETRY [LARGE SCALE ANALYSIS]</scope>
</reference>
<reference key="8">
    <citation type="journal article" date="2009" name="PLoS ONE">
        <title>A screen for spore wall permeability mutants identifies a secreted protease required for proper spore wall assembly.</title>
        <authorList>
            <person name="Suda Y."/>
            <person name="Rodriguez R.K."/>
            <person name="Coluccio A.E."/>
            <person name="Neiman A.M."/>
        </authorList>
    </citation>
    <scope>FUNCTION</scope>
</reference>
<reference key="9">
    <citation type="journal article" date="2009" name="Proc. Natl. Acad. Sci. U.S.A.">
        <title>Ab initio construction of a eukaryotic transcriptome by massively parallel mRNA sequencing.</title>
        <authorList>
            <person name="Yassour M."/>
            <person name="Kaplan T."/>
            <person name="Fraser H.B."/>
            <person name="Levin J.Z."/>
            <person name="Pfiffner J."/>
            <person name="Adiconis X."/>
            <person name="Schroth G."/>
            <person name="Luo S."/>
            <person name="Khrebtukova I."/>
            <person name="Gnirke A."/>
            <person name="Nusbaum C."/>
            <person name="Thompson D.A."/>
            <person name="Friedman N."/>
            <person name="Regev A."/>
        </authorList>
    </citation>
    <scope>ALTERNATIVE SPLICING</scope>
</reference>
<reference key="10">
    <citation type="journal article" date="2009" name="Science">
        <title>Global analysis of Cdk1 substrate phosphorylation sites provides insights into evolution.</title>
        <authorList>
            <person name="Holt L.J."/>
            <person name="Tuch B.B."/>
            <person name="Villen J."/>
            <person name="Johnson A.D."/>
            <person name="Gygi S.P."/>
            <person name="Morgan D.O."/>
        </authorList>
    </citation>
    <scope>PHOSPHORYLATION [LARGE SCALE ANALYSIS] AT SER-102</scope>
    <scope>IDENTIFICATION BY MASS SPECTROMETRY [LARGE SCALE ANALYSIS]</scope>
</reference>
<reference key="11">
    <citation type="journal article" date="2011" name="Biochim. Biophys. Acta">
        <title>Lipid particles/droplets of the yeast Saccharomyces cerevisiae revisited: lipidome meets proteome.</title>
        <authorList>
            <person name="Grillitsch K."/>
            <person name="Connerth M."/>
            <person name="Kofeler H."/>
            <person name="Arrey T.N."/>
            <person name="Rietschel B."/>
            <person name="Wagner B."/>
            <person name="Karas M."/>
            <person name="Daum G."/>
        </authorList>
    </citation>
    <scope>SUBCELLULAR LOCATION</scope>
</reference>
<reference key="12">
    <citation type="journal article" date="2011" name="Protein Cell">
        <title>Interactomic study on interaction between lipid droplets and mitochondria.</title>
        <authorList>
            <person name="Pu J."/>
            <person name="Ha C.W."/>
            <person name="Zhang S."/>
            <person name="Jung J.P."/>
            <person name="Huh W.K."/>
            <person name="Liu P."/>
        </authorList>
    </citation>
    <scope>FUNCTION</scope>
    <scope>SUBUNIT</scope>
    <scope>SUBCELLULAR LOCATION</scope>
</reference>
<reference key="13">
    <citation type="journal article" date="2015" name="J. Cell Biol.">
        <title>The seipin complex Fld1/Ldb16 stabilizes ER-lipid droplet contact sites.</title>
        <authorList>
            <person name="Grippa A."/>
            <person name="Buxo L."/>
            <person name="Mora G."/>
            <person name="Funaya C."/>
            <person name="Idrissi F.Z."/>
            <person name="Mancuso F."/>
            <person name="Gomez R."/>
            <person name="Muntanya J."/>
            <person name="Sabido E."/>
            <person name="Carvalho P."/>
        </authorList>
    </citation>
    <scope>SUBCELLULAR LOCATION</scope>
</reference>
<reference key="14">
    <citation type="journal article" date="2018" name="J. Cell Biol.">
        <title>Regulation of lipid droplets by metabolically controlled Ldo isoforms.</title>
        <authorList>
            <person name="Teixeira V."/>
            <person name="Johnsen L."/>
            <person name="Martinez-Montanes F."/>
            <person name="Grippa A."/>
            <person name="Buxo L."/>
            <person name="Idrissi F.Z."/>
            <person name="Ejsing C.S."/>
            <person name="Carvalho P."/>
        </authorList>
    </citation>
    <scope>ALTERNATIVE SPLICING</scope>
    <scope>INTERACTION WITH FLD1 AND LDB16</scope>
    <scope>IDENTIFICATION BY MASS SPECTROMETRY</scope>
</reference>
<reference key="15">
    <citation type="journal article" date="2018" name="J. Cell Biol.">
        <title>Identification of seipin-linked factors that act as determinants of a lipid droplet subpopulation.</title>
        <authorList>
            <person name="Eisenberg-Bord M."/>
            <person name="Mari M."/>
            <person name="Weill U."/>
            <person name="Rosenfeld-Gur E."/>
            <person name="Moldavski O."/>
            <person name="Castro I.G."/>
            <person name="Soni K.G."/>
            <person name="Harpaz N."/>
            <person name="Levine T.P."/>
            <person name="Futerman A.H."/>
            <person name="Reggiori F."/>
            <person name="Bankaitis V.A."/>
            <person name="Schuldiner M."/>
            <person name="Bohnert M."/>
        </authorList>
    </citation>
    <scope>ALTERNATIVE SPLICING</scope>
    <scope>FUNCTION</scope>
    <scope>SUBUNIT</scope>
</reference>
<protein>
    <recommendedName>
        <fullName evidence="15">Lipid droplet organization protein LDO16</fullName>
    </recommendedName>
    <alternativeName>
        <fullName evidence="13">Lipid droplet organization 16 KDa protein</fullName>
    </alternativeName>
    <alternativeName>
        <fullName evidence="12">Outer spore wall protein 5</fullName>
    </alternativeName>
</protein>
<accession>P40219</accession>
<accession>D6VZX0</accession>
<evidence type="ECO:0000255" key="1"/>
<evidence type="ECO:0000256" key="2">
    <source>
        <dbReference type="SAM" id="MobiDB-lite"/>
    </source>
</evidence>
<evidence type="ECO:0000269" key="3">
    <source>
    </source>
</evidence>
<evidence type="ECO:0000269" key="4">
    <source>
    </source>
</evidence>
<evidence type="ECO:0000269" key="5">
    <source>
    </source>
</evidence>
<evidence type="ECO:0000269" key="6">
    <source>
    </source>
</evidence>
<evidence type="ECO:0000269" key="7">
    <source>
    </source>
</evidence>
<evidence type="ECO:0000269" key="8">
    <source>
    </source>
</evidence>
<evidence type="ECO:0000269" key="9">
    <source>
    </source>
</evidence>
<evidence type="ECO:0000269" key="10">
    <source>
    </source>
</evidence>
<evidence type="ECO:0000269" key="11">
    <source>
    </source>
</evidence>
<evidence type="ECO:0000303" key="12">
    <source>
    </source>
</evidence>
<evidence type="ECO:0000303" key="13">
    <source>
    </source>
</evidence>
<evidence type="ECO:0000303" key="14">
    <source>
    </source>
</evidence>
<evidence type="ECO:0000305" key="15"/>
<evidence type="ECO:0000305" key="16">
    <source>
    </source>
</evidence>
<evidence type="ECO:0000305" key="17">
    <source>
    </source>
</evidence>
<evidence type="ECO:0000305" key="18">
    <source>
    </source>
</evidence>
<evidence type="ECO:0007744" key="19">
    <source>
    </source>
</evidence>
<evidence type="ECO:0007744" key="20">
    <source>
    </source>
</evidence>
<feature type="chain" id="PRO_0000203308" description="Lipid droplet organization protein LDO16">
    <location>
        <begin position="1"/>
        <end position="148"/>
    </location>
</feature>
<feature type="topological domain" description="Cytoplasmic" evidence="16">
    <location>
        <begin position="1"/>
        <end position="7"/>
    </location>
</feature>
<feature type="transmembrane region" description="Helical" evidence="1">
    <location>
        <begin position="8"/>
        <end position="28"/>
    </location>
</feature>
<feature type="topological domain" description="Lumenal" evidence="16">
    <location>
        <position position="29"/>
    </location>
</feature>
<feature type="transmembrane region" description="Helical" evidence="1">
    <location>
        <begin position="30"/>
        <end position="50"/>
    </location>
</feature>
<feature type="topological domain" description="Cytoplasmic" evidence="5">
    <location>
        <begin position="51"/>
        <end position="148"/>
    </location>
</feature>
<feature type="region of interest" description="Disordered" evidence="2">
    <location>
        <begin position="83"/>
        <end position="110"/>
    </location>
</feature>
<feature type="compositionally biased region" description="Polar residues" evidence="2">
    <location>
        <begin position="93"/>
        <end position="109"/>
    </location>
</feature>
<feature type="modified residue" description="Phosphoserine" evidence="19 20">
    <location>
        <position position="102"/>
    </location>
</feature>